<accession>Q6ZQI3</accession>
<accession>Q8C6C3</accession>
<accession>Q8CD40</accession>
<accession>Q8CI91</accession>
<name>MLEC_MOUSE</name>
<dbReference type="EMBL" id="AK129066">
    <property type="protein sequence ID" value="BAC97876.1"/>
    <property type="status" value="ALT_INIT"/>
    <property type="molecule type" value="mRNA"/>
</dbReference>
<dbReference type="EMBL" id="AK031525">
    <property type="protein sequence ID" value="BAC27434.1"/>
    <property type="molecule type" value="mRNA"/>
</dbReference>
<dbReference type="EMBL" id="AK075940">
    <property type="protein sequence ID" value="BAC36070.1"/>
    <property type="molecule type" value="mRNA"/>
</dbReference>
<dbReference type="EMBL" id="BC035300">
    <property type="protein sequence ID" value="AAH35300.2"/>
    <property type="molecule type" value="mRNA"/>
</dbReference>
<dbReference type="EMBL" id="BC058245">
    <property type="protein sequence ID" value="AAH58245.1"/>
    <property type="molecule type" value="mRNA"/>
</dbReference>
<dbReference type="CCDS" id="CCDS19581.1"/>
<dbReference type="RefSeq" id="NP_780612.2">
    <property type="nucleotide sequence ID" value="NM_175403.3"/>
</dbReference>
<dbReference type="SMR" id="Q6ZQI3"/>
<dbReference type="BioGRID" id="224576">
    <property type="interactions" value="11"/>
</dbReference>
<dbReference type="FunCoup" id="Q6ZQI3">
    <property type="interactions" value="1199"/>
</dbReference>
<dbReference type="IntAct" id="Q6ZQI3">
    <property type="interactions" value="1"/>
</dbReference>
<dbReference type="STRING" id="10090.ENSMUSP00000107749"/>
<dbReference type="CAZy" id="CBM57">
    <property type="family name" value="Carbohydrate-Binding Module Family 57"/>
</dbReference>
<dbReference type="GlyCosmos" id="Q6ZQI3">
    <property type="glycosylation" value="1 site, No reported glycans"/>
</dbReference>
<dbReference type="GlyGen" id="Q6ZQI3">
    <property type="glycosylation" value="2 sites, 1 O-linked glycan (1 site)"/>
</dbReference>
<dbReference type="iPTMnet" id="Q6ZQI3"/>
<dbReference type="PhosphoSitePlus" id="Q6ZQI3"/>
<dbReference type="SwissPalm" id="Q6ZQI3"/>
<dbReference type="jPOST" id="Q6ZQI3"/>
<dbReference type="PaxDb" id="10090-ENSMUSP00000107749"/>
<dbReference type="PeptideAtlas" id="Q6ZQI3"/>
<dbReference type="ProteomicsDB" id="252575"/>
<dbReference type="Pumba" id="Q6ZQI3"/>
<dbReference type="Antibodypedia" id="2338">
    <property type="antibodies" value="118 antibodies from 22 providers"/>
</dbReference>
<dbReference type="DNASU" id="109154"/>
<dbReference type="Ensembl" id="ENSMUST00000112121.6">
    <property type="protein sequence ID" value="ENSMUSP00000107749.3"/>
    <property type="gene ID" value="ENSMUSG00000048578.12"/>
</dbReference>
<dbReference type="GeneID" id="109154"/>
<dbReference type="KEGG" id="mmu:109154"/>
<dbReference type="UCSC" id="uc008zdf.2">
    <property type="organism name" value="mouse"/>
</dbReference>
<dbReference type="AGR" id="MGI:1924015"/>
<dbReference type="CTD" id="9761"/>
<dbReference type="MGI" id="MGI:1924015">
    <property type="gene designation" value="Mlec"/>
</dbReference>
<dbReference type="VEuPathDB" id="HostDB:ENSMUSG00000048578"/>
<dbReference type="eggNOG" id="KOG3593">
    <property type="taxonomic scope" value="Eukaryota"/>
</dbReference>
<dbReference type="GeneTree" id="ENSGT00390000016504"/>
<dbReference type="HOGENOM" id="CLU_065446_1_0_1"/>
<dbReference type="InParanoid" id="Q6ZQI3"/>
<dbReference type="OMA" id="PNPYSMD"/>
<dbReference type="OrthoDB" id="10013439at2759"/>
<dbReference type="Reactome" id="R-MMU-6798695">
    <property type="pathway name" value="Neutrophil degranulation"/>
</dbReference>
<dbReference type="BioGRID-ORCS" id="109154">
    <property type="hits" value="4 hits in 77 CRISPR screens"/>
</dbReference>
<dbReference type="CD-CODE" id="CE726F99">
    <property type="entry name" value="Postsynaptic density"/>
</dbReference>
<dbReference type="ChiTaRS" id="Mlec">
    <property type="organism name" value="mouse"/>
</dbReference>
<dbReference type="PRO" id="PR:Q6ZQI3"/>
<dbReference type="Proteomes" id="UP000000589">
    <property type="component" value="Chromosome 5"/>
</dbReference>
<dbReference type="RNAct" id="Q6ZQI3">
    <property type="molecule type" value="protein"/>
</dbReference>
<dbReference type="Bgee" id="ENSMUSG00000048578">
    <property type="expression patterns" value="Expressed in saccule of membranous labyrinth and 261 other cell types or tissues"/>
</dbReference>
<dbReference type="GO" id="GO:0005783">
    <property type="term" value="C:endoplasmic reticulum"/>
    <property type="evidence" value="ECO:0000250"/>
    <property type="project" value="UniProtKB"/>
</dbReference>
<dbReference type="GO" id="GO:0005789">
    <property type="term" value="C:endoplasmic reticulum membrane"/>
    <property type="evidence" value="ECO:0000303"/>
    <property type="project" value="ComplexPortal"/>
</dbReference>
<dbReference type="GO" id="GO:0008250">
    <property type="term" value="C:oligosaccharyltransferase complex"/>
    <property type="evidence" value="ECO:0000303"/>
    <property type="project" value="ComplexPortal"/>
</dbReference>
<dbReference type="GO" id="GO:0030246">
    <property type="term" value="F:carbohydrate binding"/>
    <property type="evidence" value="ECO:0000250"/>
    <property type="project" value="UniProtKB"/>
</dbReference>
<dbReference type="GO" id="GO:0019899">
    <property type="term" value="F:enzyme binding"/>
    <property type="evidence" value="ECO:0007669"/>
    <property type="project" value="Ensembl"/>
</dbReference>
<dbReference type="GO" id="GO:0006487">
    <property type="term" value="P:protein N-linked glycosylation"/>
    <property type="evidence" value="ECO:0000303"/>
    <property type="project" value="ComplexPortal"/>
</dbReference>
<dbReference type="FunFam" id="2.60.120.430:FF:000006">
    <property type="entry name" value="Malectin"/>
    <property type="match status" value="1"/>
</dbReference>
<dbReference type="Gene3D" id="2.60.120.430">
    <property type="entry name" value="Galactose-binding lectin"/>
    <property type="match status" value="1"/>
</dbReference>
<dbReference type="InterPro" id="IPR021720">
    <property type="entry name" value="Malectin_dom"/>
</dbReference>
<dbReference type="InterPro" id="IPR039155">
    <property type="entry name" value="MLEC"/>
</dbReference>
<dbReference type="PANTHER" id="PTHR13460">
    <property type="match status" value="1"/>
</dbReference>
<dbReference type="PANTHER" id="PTHR13460:SF0">
    <property type="entry name" value="MALECTIN"/>
    <property type="match status" value="1"/>
</dbReference>
<dbReference type="Pfam" id="PF11721">
    <property type="entry name" value="Malectin"/>
    <property type="match status" value="1"/>
</dbReference>
<sequence length="291" mass="32342">MLRPRGAEGTAVALLRLLLLLLLLGPKLRGPGLGVVGAAGAGLPESVIWAVNAGGEAHVDVHGIHFRKDPLEGRVGRASDYGMKLPILRSTPEDQILYQTERYNEETFGYEVPVKEEGDYVLVLKFAEVYFAQSQQKVFDVRLNGHVVVKDLDIFDRVGHSTAHDEIIPMSIRKGKLSVRGEVSTFTGKLYIEFVKGYYDNPKVCALYILAGTVDDVPKLQPHPGLEKKEEEEEEEEYDEGSNLKRQTNKNRVQSGPRTPNPYASDNSSLMFPILVAFGVFIPTLFCLCRL</sequence>
<protein>
    <recommendedName>
        <fullName evidence="5">Malectin</fullName>
    </recommendedName>
</protein>
<comment type="function">
    <text evidence="1">Carbohydrate-binding protein with a strong ligand preference for Glc2-N-glycan. May play a role in the early steps of protein N-glycosylation (By similarity).</text>
</comment>
<comment type="subunit">
    <text evidence="2">Interacts with the oligosaccharyltransferase (OST) complex.</text>
</comment>
<comment type="subcellular location">
    <subcellularLocation>
        <location evidence="1">Endoplasmic reticulum membrane</location>
        <topology evidence="1">Single-pass type I membrane protein</topology>
    </subcellularLocation>
</comment>
<comment type="similarity">
    <text evidence="5">Belongs to the malectin family.</text>
</comment>
<comment type="sequence caution" evidence="5">
    <conflict type="erroneous initiation">
        <sequence resource="EMBL-CDS" id="BAC97876"/>
    </conflict>
</comment>
<gene>
    <name evidence="6" type="primary">Mlec</name>
    <name type="synonym">Kiaa0152</name>
</gene>
<evidence type="ECO:0000250" key="1"/>
<evidence type="ECO:0000250" key="2">
    <source>
        <dbReference type="UniProtKB" id="Q14165"/>
    </source>
</evidence>
<evidence type="ECO:0000255" key="3"/>
<evidence type="ECO:0000256" key="4">
    <source>
        <dbReference type="SAM" id="MobiDB-lite"/>
    </source>
</evidence>
<evidence type="ECO:0000305" key="5"/>
<evidence type="ECO:0000312" key="6">
    <source>
        <dbReference type="MGI" id="MGI:1924015"/>
    </source>
</evidence>
<organism>
    <name type="scientific">Mus musculus</name>
    <name type="common">Mouse</name>
    <dbReference type="NCBI Taxonomy" id="10090"/>
    <lineage>
        <taxon>Eukaryota</taxon>
        <taxon>Metazoa</taxon>
        <taxon>Chordata</taxon>
        <taxon>Craniata</taxon>
        <taxon>Vertebrata</taxon>
        <taxon>Euteleostomi</taxon>
        <taxon>Mammalia</taxon>
        <taxon>Eutheria</taxon>
        <taxon>Euarchontoglires</taxon>
        <taxon>Glires</taxon>
        <taxon>Rodentia</taxon>
        <taxon>Myomorpha</taxon>
        <taxon>Muroidea</taxon>
        <taxon>Muridae</taxon>
        <taxon>Murinae</taxon>
        <taxon>Mus</taxon>
        <taxon>Mus</taxon>
    </lineage>
</organism>
<keyword id="KW-0119">Carbohydrate metabolism</keyword>
<keyword id="KW-0256">Endoplasmic reticulum</keyword>
<keyword id="KW-0325">Glycoprotein</keyword>
<keyword id="KW-0472">Membrane</keyword>
<keyword id="KW-1185">Reference proteome</keyword>
<keyword id="KW-0732">Signal</keyword>
<keyword id="KW-0812">Transmembrane</keyword>
<keyword id="KW-1133">Transmembrane helix</keyword>
<feature type="signal peptide" evidence="3">
    <location>
        <begin position="1"/>
        <end position="30"/>
    </location>
</feature>
<feature type="chain" id="PRO_0000013983" description="Malectin">
    <location>
        <begin position="31"/>
        <end position="291"/>
    </location>
</feature>
<feature type="topological domain" description="Lumenal" evidence="3">
    <location>
        <begin position="31"/>
        <end position="268"/>
    </location>
</feature>
<feature type="transmembrane region" description="Helical" evidence="3">
    <location>
        <begin position="269"/>
        <end position="289"/>
    </location>
</feature>
<feature type="topological domain" description="Cytoplasmic" evidence="3">
    <location>
        <begin position="290"/>
        <end position="291"/>
    </location>
</feature>
<feature type="region of interest" description="Disordered" evidence="4">
    <location>
        <begin position="220"/>
        <end position="264"/>
    </location>
</feature>
<feature type="compositionally biased region" description="Acidic residues" evidence="4">
    <location>
        <begin position="230"/>
        <end position="240"/>
    </location>
</feature>
<feature type="compositionally biased region" description="Polar residues" evidence="4">
    <location>
        <begin position="244"/>
        <end position="264"/>
    </location>
</feature>
<feature type="binding site" evidence="1">
    <location>
        <position position="81"/>
    </location>
    <ligand>
        <name>a carbohydrate</name>
        <dbReference type="ChEBI" id="CHEBI:16646"/>
    </ligand>
</feature>
<feature type="binding site" evidence="1">
    <location>
        <position position="103"/>
    </location>
    <ligand>
        <name>a carbohydrate</name>
        <dbReference type="ChEBI" id="CHEBI:16646"/>
    </ligand>
</feature>
<feature type="binding site" evidence="1">
    <location>
        <position position="130"/>
    </location>
    <ligand>
        <name>a carbohydrate</name>
        <dbReference type="ChEBI" id="CHEBI:16646"/>
    </ligand>
</feature>
<feature type="binding site" evidence="1">
    <location>
        <position position="131"/>
    </location>
    <ligand>
        <name>a carbohydrate</name>
        <dbReference type="ChEBI" id="CHEBI:16646"/>
    </ligand>
</feature>
<feature type="binding site" evidence="1">
    <location>
        <position position="200"/>
    </location>
    <ligand>
        <name>a carbohydrate</name>
        <dbReference type="ChEBI" id="CHEBI:16646"/>
    </ligand>
</feature>
<feature type="glycosylation site" description="N-linked (GlcNAc...) asparagine" evidence="3">
    <location>
        <position position="267"/>
    </location>
</feature>
<feature type="sequence conflict" description="In Ref. 2; BAC27434." evidence="5" ref="2">
    <original>D</original>
    <variation>G</variation>
    <location>
        <position position="69"/>
    </location>
</feature>
<proteinExistence type="evidence at protein level"/>
<reference key="1">
    <citation type="journal article" date="2003" name="DNA Res.">
        <title>Prediction of the coding sequences of mouse homologues of KIAA gene: III. The complete nucleotide sequences of 500 mouse KIAA-homologous cDNAs identified by screening of terminal sequences of cDNA clones randomly sampled from size-fractionated libraries.</title>
        <authorList>
            <person name="Okazaki N."/>
            <person name="Kikuno R."/>
            <person name="Ohara R."/>
            <person name="Inamoto S."/>
            <person name="Koseki H."/>
            <person name="Hiraoka S."/>
            <person name="Saga Y."/>
            <person name="Nagase T."/>
            <person name="Ohara O."/>
            <person name="Koga H."/>
        </authorList>
    </citation>
    <scope>NUCLEOTIDE SEQUENCE [LARGE SCALE MRNA]</scope>
    <source>
        <tissue>Embryonic tail</tissue>
    </source>
</reference>
<reference key="2">
    <citation type="journal article" date="2005" name="Science">
        <title>The transcriptional landscape of the mammalian genome.</title>
        <authorList>
            <person name="Carninci P."/>
            <person name="Kasukawa T."/>
            <person name="Katayama S."/>
            <person name="Gough J."/>
            <person name="Frith M.C."/>
            <person name="Maeda N."/>
            <person name="Oyama R."/>
            <person name="Ravasi T."/>
            <person name="Lenhard B."/>
            <person name="Wells C."/>
            <person name="Kodzius R."/>
            <person name="Shimokawa K."/>
            <person name="Bajic V.B."/>
            <person name="Brenner S.E."/>
            <person name="Batalov S."/>
            <person name="Forrest A.R."/>
            <person name="Zavolan M."/>
            <person name="Davis M.J."/>
            <person name="Wilming L.G."/>
            <person name="Aidinis V."/>
            <person name="Allen J.E."/>
            <person name="Ambesi-Impiombato A."/>
            <person name="Apweiler R."/>
            <person name="Aturaliya R.N."/>
            <person name="Bailey T.L."/>
            <person name="Bansal M."/>
            <person name="Baxter L."/>
            <person name="Beisel K.W."/>
            <person name="Bersano T."/>
            <person name="Bono H."/>
            <person name="Chalk A.M."/>
            <person name="Chiu K.P."/>
            <person name="Choudhary V."/>
            <person name="Christoffels A."/>
            <person name="Clutterbuck D.R."/>
            <person name="Crowe M.L."/>
            <person name="Dalla E."/>
            <person name="Dalrymple B.P."/>
            <person name="de Bono B."/>
            <person name="Della Gatta G."/>
            <person name="di Bernardo D."/>
            <person name="Down T."/>
            <person name="Engstrom P."/>
            <person name="Fagiolini M."/>
            <person name="Faulkner G."/>
            <person name="Fletcher C.F."/>
            <person name="Fukushima T."/>
            <person name="Furuno M."/>
            <person name="Futaki S."/>
            <person name="Gariboldi M."/>
            <person name="Georgii-Hemming P."/>
            <person name="Gingeras T.R."/>
            <person name="Gojobori T."/>
            <person name="Green R.E."/>
            <person name="Gustincich S."/>
            <person name="Harbers M."/>
            <person name="Hayashi Y."/>
            <person name="Hensch T.K."/>
            <person name="Hirokawa N."/>
            <person name="Hill D."/>
            <person name="Huminiecki L."/>
            <person name="Iacono M."/>
            <person name="Ikeo K."/>
            <person name="Iwama A."/>
            <person name="Ishikawa T."/>
            <person name="Jakt M."/>
            <person name="Kanapin A."/>
            <person name="Katoh M."/>
            <person name="Kawasawa Y."/>
            <person name="Kelso J."/>
            <person name="Kitamura H."/>
            <person name="Kitano H."/>
            <person name="Kollias G."/>
            <person name="Krishnan S.P."/>
            <person name="Kruger A."/>
            <person name="Kummerfeld S.K."/>
            <person name="Kurochkin I.V."/>
            <person name="Lareau L.F."/>
            <person name="Lazarevic D."/>
            <person name="Lipovich L."/>
            <person name="Liu J."/>
            <person name="Liuni S."/>
            <person name="McWilliam S."/>
            <person name="Madan Babu M."/>
            <person name="Madera M."/>
            <person name="Marchionni L."/>
            <person name="Matsuda H."/>
            <person name="Matsuzawa S."/>
            <person name="Miki H."/>
            <person name="Mignone F."/>
            <person name="Miyake S."/>
            <person name="Morris K."/>
            <person name="Mottagui-Tabar S."/>
            <person name="Mulder N."/>
            <person name="Nakano N."/>
            <person name="Nakauchi H."/>
            <person name="Ng P."/>
            <person name="Nilsson R."/>
            <person name="Nishiguchi S."/>
            <person name="Nishikawa S."/>
            <person name="Nori F."/>
            <person name="Ohara O."/>
            <person name="Okazaki Y."/>
            <person name="Orlando V."/>
            <person name="Pang K.C."/>
            <person name="Pavan W.J."/>
            <person name="Pavesi G."/>
            <person name="Pesole G."/>
            <person name="Petrovsky N."/>
            <person name="Piazza S."/>
            <person name="Reed J."/>
            <person name="Reid J.F."/>
            <person name="Ring B.Z."/>
            <person name="Ringwald M."/>
            <person name="Rost B."/>
            <person name="Ruan Y."/>
            <person name="Salzberg S.L."/>
            <person name="Sandelin A."/>
            <person name="Schneider C."/>
            <person name="Schoenbach C."/>
            <person name="Sekiguchi K."/>
            <person name="Semple C.A."/>
            <person name="Seno S."/>
            <person name="Sessa L."/>
            <person name="Sheng Y."/>
            <person name="Shibata Y."/>
            <person name="Shimada H."/>
            <person name="Shimada K."/>
            <person name="Silva D."/>
            <person name="Sinclair B."/>
            <person name="Sperling S."/>
            <person name="Stupka E."/>
            <person name="Sugiura K."/>
            <person name="Sultana R."/>
            <person name="Takenaka Y."/>
            <person name="Taki K."/>
            <person name="Tammoja K."/>
            <person name="Tan S.L."/>
            <person name="Tang S."/>
            <person name="Taylor M.S."/>
            <person name="Tegner J."/>
            <person name="Teichmann S.A."/>
            <person name="Ueda H.R."/>
            <person name="van Nimwegen E."/>
            <person name="Verardo R."/>
            <person name="Wei C.L."/>
            <person name="Yagi K."/>
            <person name="Yamanishi H."/>
            <person name="Zabarovsky E."/>
            <person name="Zhu S."/>
            <person name="Zimmer A."/>
            <person name="Hide W."/>
            <person name="Bult C."/>
            <person name="Grimmond S.M."/>
            <person name="Teasdale R.D."/>
            <person name="Liu E.T."/>
            <person name="Brusic V."/>
            <person name="Quackenbush J."/>
            <person name="Wahlestedt C."/>
            <person name="Mattick J.S."/>
            <person name="Hume D.A."/>
            <person name="Kai C."/>
            <person name="Sasaki D."/>
            <person name="Tomaru Y."/>
            <person name="Fukuda S."/>
            <person name="Kanamori-Katayama M."/>
            <person name="Suzuki M."/>
            <person name="Aoki J."/>
            <person name="Arakawa T."/>
            <person name="Iida J."/>
            <person name="Imamura K."/>
            <person name="Itoh M."/>
            <person name="Kato T."/>
            <person name="Kawaji H."/>
            <person name="Kawagashira N."/>
            <person name="Kawashima T."/>
            <person name="Kojima M."/>
            <person name="Kondo S."/>
            <person name="Konno H."/>
            <person name="Nakano K."/>
            <person name="Ninomiya N."/>
            <person name="Nishio T."/>
            <person name="Okada M."/>
            <person name="Plessy C."/>
            <person name="Shibata K."/>
            <person name="Shiraki T."/>
            <person name="Suzuki S."/>
            <person name="Tagami M."/>
            <person name="Waki K."/>
            <person name="Watahiki A."/>
            <person name="Okamura-Oho Y."/>
            <person name="Suzuki H."/>
            <person name="Kawai J."/>
            <person name="Hayashizaki Y."/>
        </authorList>
    </citation>
    <scope>NUCLEOTIDE SEQUENCE [LARGE SCALE MRNA]</scope>
    <source>
        <strain>C57BL/6J</strain>
        <tissue>Testis</tissue>
    </source>
</reference>
<reference key="3">
    <citation type="journal article" date="2004" name="Genome Res.">
        <title>The status, quality, and expansion of the NIH full-length cDNA project: the Mammalian Gene Collection (MGC).</title>
        <authorList>
            <consortium name="The MGC Project Team"/>
        </authorList>
    </citation>
    <scope>NUCLEOTIDE SEQUENCE [LARGE SCALE MRNA]</scope>
    <source>
        <strain>FVB/N</strain>
        <tissue>Kidney</tissue>
        <tissue>Olfactory epithelium</tissue>
    </source>
</reference>
<reference key="4">
    <citation type="journal article" date="2010" name="Cell">
        <title>A tissue-specific atlas of mouse protein phosphorylation and expression.</title>
        <authorList>
            <person name="Huttlin E.L."/>
            <person name="Jedrychowski M.P."/>
            <person name="Elias J.E."/>
            <person name="Goswami T."/>
            <person name="Rad R."/>
            <person name="Beausoleil S.A."/>
            <person name="Villen J."/>
            <person name="Haas W."/>
            <person name="Sowa M.E."/>
            <person name="Gygi S.P."/>
        </authorList>
    </citation>
    <scope>IDENTIFICATION BY MASS SPECTROMETRY [LARGE SCALE ANALYSIS]</scope>
    <source>
        <tissue>Brain</tissue>
        <tissue>Brown adipose tissue</tissue>
        <tissue>Heart</tissue>
        <tissue>Kidney</tissue>
        <tissue>Liver</tissue>
        <tissue>Lung</tissue>
        <tissue>Pancreas</tissue>
        <tissue>Spleen</tissue>
        <tissue>Testis</tissue>
    </source>
</reference>